<protein>
    <recommendedName>
        <fullName>Protein Tat</fullName>
    </recommendedName>
    <alternativeName>
        <fullName>Transactivating regulatory protein</fullName>
    </alternativeName>
</protein>
<organismHost>
    <name type="scientific">Homo sapiens</name>
    <name type="common">Human</name>
    <dbReference type="NCBI Taxonomy" id="9606"/>
</organismHost>
<evidence type="ECO:0000250" key="1"/>
<evidence type="ECO:0000250" key="2">
    <source>
        <dbReference type="UniProtKB" id="P04608"/>
    </source>
</evidence>
<evidence type="ECO:0000255" key="3"/>
<evidence type="ECO:0000256" key="4">
    <source>
        <dbReference type="SAM" id="MobiDB-lite"/>
    </source>
</evidence>
<evidence type="ECO:0000305" key="5"/>
<feature type="chain" id="PRO_0000085341" description="Protein Tat">
    <location>
        <begin position="1" status="less than"/>
        <end position="29"/>
    </location>
</feature>
<feature type="region of interest" description="Disordered" evidence="4">
    <location>
        <begin position="1"/>
        <end position="29"/>
    </location>
</feature>
<feature type="short sequence motif" description="Cell attachment site" evidence="3">
    <location>
        <begin position="6"/>
        <end position="8"/>
    </location>
</feature>
<feature type="compositionally biased region" description="Basic and acidic residues" evidence="4">
    <location>
        <begin position="13"/>
        <end position="29"/>
    </location>
</feature>
<feature type="non-terminal residue">
    <location>
        <position position="1"/>
    </location>
</feature>
<sequence length="29" mass="3229">PSSQPRGDPTGQEEPKKKVEKKTTTDPFD</sequence>
<name>TAT_HV1Z3</name>
<organism>
    <name type="scientific">Human immunodeficiency virus type 1 group M subtype U (isolate Z3)</name>
    <name type="common">HIV-1</name>
    <dbReference type="NCBI Taxonomy" id="11680"/>
    <lineage>
        <taxon>Viruses</taxon>
        <taxon>Riboviria</taxon>
        <taxon>Pararnavirae</taxon>
        <taxon>Artverviricota</taxon>
        <taxon>Revtraviricetes</taxon>
        <taxon>Ortervirales</taxon>
        <taxon>Retroviridae</taxon>
        <taxon>Orthoretrovirinae</taxon>
        <taxon>Lentivirus</taxon>
        <taxon>Human immunodeficiency virus type 1</taxon>
    </lineage>
</organism>
<reference key="1">
    <citation type="journal article" date="1986" name="Proc. Natl. Acad. Sci. U.S.A.">
        <title>Identification of conserved and divergent domains within the envelope gene of the acquired immunodeficiency syndrome retrovirus.</title>
        <authorList>
            <person name="Willey R.W."/>
            <person name="Rutledge R.A."/>
            <person name="Dias S."/>
            <person name="Folks T."/>
            <person name="Theodore T."/>
            <person name="Buckler C.E."/>
            <person name="Martin M.A."/>
        </authorList>
    </citation>
    <scope>NUCLEOTIDE SEQUENCE [GENOMIC RNA]</scope>
</reference>
<reference key="2">
    <citation type="journal article" date="2005" name="Microbes Infect.">
        <title>Decoding Tat: the biology of HIV Tat posttranslational modifications.</title>
        <authorList>
            <person name="Hetzer C."/>
            <person name="Dormeyer W."/>
            <person name="Schnolzer M."/>
            <person name="Ott M."/>
        </authorList>
    </citation>
    <scope>REVIEW</scope>
    <scope>ALTERNATIVE SPLICING</scope>
</reference>
<reference key="3">
    <citation type="journal article" date="2006" name="Front. Biosci.">
        <title>The multiple functions of HIV-1 Tat: proliferation versus apoptosis.</title>
        <authorList>
            <person name="Peruzzi F."/>
        </authorList>
    </citation>
    <scope>REVIEW</scope>
</reference>
<reference key="4">
    <citation type="journal article" date="2006" name="Microbes Infect.">
        <title>HIV tat and neurotoxicity.</title>
        <authorList>
            <person name="King J.E."/>
            <person name="Eugenin E.A."/>
            <person name="Buckner C.M."/>
            <person name="Berman J.W."/>
        </authorList>
    </citation>
    <scope>REVIEW</scope>
</reference>
<proteinExistence type="inferred from homology"/>
<comment type="function">
    <text evidence="2">Transcriptional activator that increases RNA Pol II processivity, thereby increasing the level of full-length viral transcripts. Recognizes a hairpin structure at the 5'-LTR of the nascent viral mRNAs referred to as the transactivation responsive RNA element (TAR) and recruits the cyclin T1-CDK9 complex (P-TEFb complex) that will in turn hyperphosphorylate the RNA polymerase II to allow efficient elongation. The CDK9 component of P-TEFb and other Tat-activated kinases hyperphosphorylate the C-terminus of RNA Pol II that becomes stabilized and much more processive. Other factors such as HTATSF1/Tat-SF1, SUPT5H/SPT5, and HTATIP2 are also important for Tat's function. Besides its effect on RNA Pol II processivity, Tat induces chromatin remodeling of proviral genes by recruiting the histone acetyltransferases (HATs) CREBBP, EP300 and PCAF to the chromatin. This also contributes to the increase in proviral transcription rate, especially when the provirus integrates in transcriptionally silent region of the host genome. To ensure maximal activation of the LTR, Tat mediates nuclear translocation of NF-kappa-B by interacting with host RELA. Through its interaction with host TBP, Tat may also modulate transcription initiation. Tat can reactivate a latently infected cell by penetrating in it and transactivating its LTR promoter. In the cytoplasm, Tat is thought to act as a translational activator of HIV-1 mRNAs.</text>
</comment>
<comment type="function">
    <text evidence="1">Extracellular circulating Tat can be endocytosed by surrounding uninfected cells via the binding to several surface receptors such as CD26, CXCR4, heparan sulfate proteoglycans (HSPG) or LDLR. Neurons are rarely infected, but they internalize Tat via their LDLR. Endosomal low pH allows Tat to cross the endosome membrane to enter the cytosol and eventually further translocate into the nucleus, thereby inducing severe cell dysfunctions ranging from cell activation to cell death. Through its interaction with nuclear HATs, Tat is potentially able to control the acetylation-dependent cellular gene expression. Tat seems to inhibit the HAT activity of KAT5/Tip60 and TAF1, and consequently modify the expression of specific cellular genes. Modulates the expression of many cellular genes involved in cell survival, proliferation or in coding for cytokines (such as IL10) or cytokine receptors. May be involved in the derepression of host interleukin IL2 expression. Mediates the activation of cyclin-dependent kinases and dysregulation of microtubule network. Tat plays a role in T-cell and neurons apoptosis. Tat induced neurotoxicity and apoptosis probably contribute to neuroAIDS. Host extracellular matrix metalloproteinase MMP1 cleaves Tat and decreases Tat's mediated neurotoxicity. Circulating Tat also acts as a chemokine-like and/or growth factor-like molecule that binds to specific receptors on the surface of the cells, affecting many cellular pathways. In the vascular system, Tat binds to ITGAV/ITGB3 and ITGA5/ITGB1 integrins dimers at the surface of endothelial cells and competes with bFGF for heparin-binding sites, leading to an excess of soluble bFGF. Binds to KDR/VEGFR-2. All these Tat-mediated effects enhance angiogenesis in Kaposi's sarcoma lesions (By similarity).</text>
</comment>
<comment type="subunit">
    <text evidence="1">Interacts with host CCNT1. Associates with the P-TEFb complex composed at least of Tat, P-TEFb (CDK9 and CCNT1), TAR RNA, RNA Pol II. Recruits the HATs CREBBP, TAF1/TFIID, EP300, PCAF and GCN5L2. Interacts with host KAT5/Tip60; this interaction targets the latter to degradation. Interacts with the host deacetylase SIRT1. Interacts with host capping enzyme RNGTT; this interaction stimulates RNGTT. Binds to host KDR, and to the host integrins ITGAV/ITGB3 and ITGA5/ITGB1. Interacts with host KPNB1/importin beta-1 without previous binding to KPNA1/importin alpha-1. Interacts with EIF2AK2. Interacts with host nucleosome assembly protein NAP1L1; this interaction may be required for the transport of Tat within the nucleus, since the two proteins interact at the nuclear rim. Interacts with host C1QBP/SF2P32; this interaction involves lysine-acetylated Tat. Interacts with the host chemokine receptors CCR2, CCR3 and CXCR4. Interacts with host DPP4/CD26; this interaction may trigger an anti-proliferative effect. Interacts with host LDLR. Interacts with the host extracellular matrix metalloproteinase MMP1. Interacts with host PRMT6; this interaction mediates Tat's methylation. Interacts with, and is ubiquitinated by MDM2/Hdm2. Interacts with host PSMC3 and HTATIP2. Interacts with STAB1; this interaction may overcome SATB1-mediated repression of IL2 and IL2RA (interleukin) in T cells by binding to the same domain than HDAC1. Interacts (when acetylated) with human CDK13, thereby increasing HIV-1 mRNA splicing and promoting the production of the doubly spliced HIV-1 protein Nef (By similarity).</text>
</comment>
<comment type="subcellular location">
    <subcellularLocation>
        <location>Host nucleus</location>
        <location>Host nucleolus</location>
    </subcellularLocation>
    <subcellularLocation>
        <location>Host cytoplasm</location>
    </subcellularLocation>
    <subcellularLocation>
        <location>Secreted</location>
    </subcellularLocation>
    <text evidence="1">Probably localizes to both nuclear and nucleolar compartments. Nuclear localization is mediated through the interaction of the nuclear localization signal with importin KPNB1. Secretion occurs through a Golgi-independent pathway. Tat is released from infected cells to the extracellular space where it remains associated to the cell membrane, or is secreted into the cerebrospinal fluid and sera. Extracellular Tat can be endocytosed by surrounding uninfected cells via binding to several receptors depending on the cell type (By similarity).</text>
</comment>
<comment type="alternative products">
    <event type="alternative splicing"/>
    <isoform>
        <id>P12510-1</id>
        <name>Long</name>
        <sequence type="displayed"/>
    </isoform>
    <isoform>
        <id>P12510-2</id>
        <name>Short</name>
        <sequence type="not described"/>
    </isoform>
</comment>
<comment type="domain">
    <text evidence="1">The transactivation domain mediates the interaction with CCNT1, GCN5L2, and MDM2.</text>
</comment>
<comment type="domain">
    <text evidence="1">The Arg-rich RNA-binding region binds the TAR RNA. This region also mediates the nuclear localization through direct binding to KPNB1 and is involved in Tat's transfer across cell membranes (protein transduction). The same region is required for the interaction with EP300, PCAF, EIF2AK2 and KDR (By similarity).</text>
</comment>
<comment type="domain">
    <text evidence="1 5">The Cys-rich region may bind 2 zinc ions (Potential). This region is involved in binding to KAT5 (By similarity).</text>
</comment>
<comment type="domain">
    <text evidence="1">The cell attachment site mediates the interaction with ITGAV/ITGB3 and ITGA5/ITGB1 integrins, leading to vascular cell migration and invasion. This interaction also provides endothelial cells with the adhesion signal they require to grow in response to mitogens (By similarity).</text>
</comment>
<comment type="PTM">
    <text evidence="1">Acetylation by EP300, CREBBP, GCN5L2/GCN5 and PCAF regulates the transactivation activity of Tat.</text>
</comment>
<comment type="PTM">
    <text evidence="1">Phosphorylated by EIF2AK2 on serine and threonine residues adjacent to the basic region important for TAR RNA binding and function. Phosphorylation of Tat by EIF2AK2 is dependent on the prior activation of EIF2AK2 by dsRNA (By similarity).</text>
</comment>
<comment type="PTM">
    <text evidence="1">Asymmetrical arginine methylation by host PRMT6 seems to diminish the transactivation capacity of Tat and affects the interaction with host CCNT1.</text>
</comment>
<comment type="PTM">
    <text evidence="1">Polyubiquitination by MDM2 does not target Tat to degradation, but activates its transactivation function and fosters interaction with CCNT1 and TAR RNA.</text>
</comment>
<comment type="miscellaneous">
    <text>HIV-1 lineages are divided in three main groups, M (for Major), O (for Outlier), and N (for New, or Non-M, Non-O). The vast majority of strains found worldwide belong to the group M. Group O seems to be endemic to and largely confined to Cameroon and neighboring countries in West Central Africa, where these viruses represent a small minority of HIV-1 strains. The group N is represented by a limited number of isolates from Cameroonian persons. The group M is further subdivided in 9 clades or subtypes (A to D, F to H, J and K).</text>
</comment>
<comment type="miscellaneous">
    <molecule>Isoform Short</molecule>
    <text evidence="5">Expressed in the late stage of the infection cycle, when unspliced viral RNAs are exported to the cytoplasm by the viral Rev protein.</text>
</comment>
<comment type="similarity">
    <text evidence="5">Belongs to the lentiviruses Tat family.</text>
</comment>
<accession>P12510</accession>
<dbReference type="EMBL" id="K03347">
    <property type="protein sequence ID" value="AAA45374.1"/>
    <property type="molecule type" value="Genomic_RNA"/>
</dbReference>
<dbReference type="GO" id="GO:0005576">
    <property type="term" value="C:extracellular region"/>
    <property type="evidence" value="ECO:0007669"/>
    <property type="project" value="UniProtKB-SubCell"/>
</dbReference>
<dbReference type="GO" id="GO:0030430">
    <property type="term" value="C:host cell cytoplasm"/>
    <property type="evidence" value="ECO:0007669"/>
    <property type="project" value="UniProtKB-SubCell"/>
</dbReference>
<dbReference type="GO" id="GO:0044196">
    <property type="term" value="C:host cell nucleolus"/>
    <property type="evidence" value="ECO:0007669"/>
    <property type="project" value="UniProtKB-SubCell"/>
</dbReference>
<dbReference type="GO" id="GO:0046872">
    <property type="term" value="F:metal ion binding"/>
    <property type="evidence" value="ECO:0007669"/>
    <property type="project" value="UniProtKB-KW"/>
</dbReference>
<dbReference type="GO" id="GO:0003723">
    <property type="term" value="F:RNA binding"/>
    <property type="evidence" value="ECO:0007669"/>
    <property type="project" value="UniProtKB-KW"/>
</dbReference>
<keyword id="KW-0007">Acetylation</keyword>
<keyword id="KW-0010">Activator</keyword>
<keyword id="KW-0014">AIDS</keyword>
<keyword id="KW-0025">Alternative splicing</keyword>
<keyword id="KW-0053">Apoptosis</keyword>
<keyword id="KW-1035">Host cytoplasm</keyword>
<keyword id="KW-1048">Host nucleus</keyword>
<keyword id="KW-0945">Host-virus interaction</keyword>
<keyword id="KW-0479">Metal-binding</keyword>
<keyword id="KW-0488">Methylation</keyword>
<keyword id="KW-0597">Phosphoprotein</keyword>
<keyword id="KW-0694">RNA-binding</keyword>
<keyword id="KW-0964">Secreted</keyword>
<keyword id="KW-0804">Transcription</keyword>
<keyword id="KW-0805">Transcription regulation</keyword>
<keyword id="KW-0832">Ubl conjugation</keyword>
<keyword id="KW-0862">Zinc</keyword>